<name>Y4613_BACAN</name>
<gene>
    <name type="ordered locus">BA_4613</name>
    <name type="ordered locus">GBAA_4613</name>
    <name type="ordered locus">BAS4281</name>
</gene>
<reference key="1">
    <citation type="journal article" date="2003" name="Nature">
        <title>The genome sequence of Bacillus anthracis Ames and comparison to closely related bacteria.</title>
        <authorList>
            <person name="Read T.D."/>
            <person name="Peterson S.N."/>
            <person name="Tourasse N.J."/>
            <person name="Baillie L.W."/>
            <person name="Paulsen I.T."/>
            <person name="Nelson K.E."/>
            <person name="Tettelin H."/>
            <person name="Fouts D.E."/>
            <person name="Eisen J.A."/>
            <person name="Gill S.R."/>
            <person name="Holtzapple E.K."/>
            <person name="Okstad O.A."/>
            <person name="Helgason E."/>
            <person name="Rilstone J."/>
            <person name="Wu M."/>
            <person name="Kolonay J.F."/>
            <person name="Beanan M.J."/>
            <person name="Dodson R.J."/>
            <person name="Brinkac L.M."/>
            <person name="Gwinn M.L."/>
            <person name="DeBoy R.T."/>
            <person name="Madpu R."/>
            <person name="Daugherty S.C."/>
            <person name="Durkin A.S."/>
            <person name="Haft D.H."/>
            <person name="Nelson W.C."/>
            <person name="Peterson J.D."/>
            <person name="Pop M."/>
            <person name="Khouri H.M."/>
            <person name="Radune D."/>
            <person name="Benton J.L."/>
            <person name="Mahamoud Y."/>
            <person name="Jiang L."/>
            <person name="Hance I.R."/>
            <person name="Weidman J.F."/>
            <person name="Berry K.J."/>
            <person name="Plaut R.D."/>
            <person name="Wolf A.M."/>
            <person name="Watkins K.L."/>
            <person name="Nierman W.C."/>
            <person name="Hazen A."/>
            <person name="Cline R.T."/>
            <person name="Redmond C."/>
            <person name="Thwaite J.E."/>
            <person name="White O."/>
            <person name="Salzberg S.L."/>
            <person name="Thomason B."/>
            <person name="Friedlander A.M."/>
            <person name="Koehler T.M."/>
            <person name="Hanna P.C."/>
            <person name="Kolstoe A.-B."/>
            <person name="Fraser C.M."/>
        </authorList>
    </citation>
    <scope>NUCLEOTIDE SEQUENCE [LARGE SCALE GENOMIC DNA]</scope>
    <source>
        <strain>Ames / isolate Porton</strain>
    </source>
</reference>
<reference key="2">
    <citation type="submission" date="2004-01" db="EMBL/GenBank/DDBJ databases">
        <title>Complete genome sequence of Bacillus anthracis Sterne.</title>
        <authorList>
            <person name="Brettin T.S."/>
            <person name="Bruce D."/>
            <person name="Challacombe J.F."/>
            <person name="Gilna P."/>
            <person name="Han C."/>
            <person name="Hill K."/>
            <person name="Hitchcock P."/>
            <person name="Jackson P."/>
            <person name="Keim P."/>
            <person name="Longmire J."/>
            <person name="Lucas S."/>
            <person name="Okinaka R."/>
            <person name="Richardson P."/>
            <person name="Rubin E."/>
            <person name="Tice H."/>
        </authorList>
    </citation>
    <scope>NUCLEOTIDE SEQUENCE [LARGE SCALE GENOMIC DNA]</scope>
    <source>
        <strain>Sterne</strain>
    </source>
</reference>
<reference key="3">
    <citation type="journal article" date="2009" name="J. Bacteriol.">
        <title>The complete genome sequence of Bacillus anthracis Ames 'Ancestor'.</title>
        <authorList>
            <person name="Ravel J."/>
            <person name="Jiang L."/>
            <person name="Stanley S.T."/>
            <person name="Wilson M.R."/>
            <person name="Decker R.S."/>
            <person name="Read T.D."/>
            <person name="Worsham P."/>
            <person name="Keim P.S."/>
            <person name="Salzberg S.L."/>
            <person name="Fraser-Liggett C.M."/>
            <person name="Rasko D.A."/>
        </authorList>
    </citation>
    <scope>NUCLEOTIDE SEQUENCE [LARGE SCALE GENOMIC DNA]</scope>
    <source>
        <strain>Ames ancestor</strain>
    </source>
</reference>
<feature type="chain" id="PRO_0000304812" description="UPF0473 protein BA_4613/GBAA_4613/BAS4281">
    <location>
        <begin position="1"/>
        <end position="92"/>
    </location>
</feature>
<evidence type="ECO:0000255" key="1">
    <source>
        <dbReference type="HAMAP-Rule" id="MF_01448"/>
    </source>
</evidence>
<accession>Q81LK3</accession>
<accession>Q6HT09</accession>
<accession>Q6KM98</accession>
<comment type="similarity">
    <text evidence="1">Belongs to the UPF0473 family.</text>
</comment>
<dbReference type="EMBL" id="AE016879">
    <property type="protein sequence ID" value="AAP28318.1"/>
    <property type="molecule type" value="Genomic_DNA"/>
</dbReference>
<dbReference type="EMBL" id="AE017334">
    <property type="protein sequence ID" value="AAT33735.1"/>
    <property type="molecule type" value="Genomic_DNA"/>
</dbReference>
<dbReference type="EMBL" id="AE017225">
    <property type="protein sequence ID" value="AAT56580.1"/>
    <property type="molecule type" value="Genomic_DNA"/>
</dbReference>
<dbReference type="RefSeq" id="NP_846832.1">
    <property type="nucleotide sequence ID" value="NC_003997.3"/>
</dbReference>
<dbReference type="RefSeq" id="WP_000392247.1">
    <property type="nucleotide sequence ID" value="NZ_WXXJ01000027.1"/>
</dbReference>
<dbReference type="RefSeq" id="YP_030529.1">
    <property type="nucleotide sequence ID" value="NC_005945.1"/>
</dbReference>
<dbReference type="STRING" id="261594.GBAA_4613"/>
<dbReference type="DNASU" id="1088655"/>
<dbReference type="KEGG" id="ban:BA_4613"/>
<dbReference type="KEGG" id="bar:GBAA_4613"/>
<dbReference type="KEGG" id="bat:BAS4281"/>
<dbReference type="PATRIC" id="fig|198094.11.peg.4580"/>
<dbReference type="eggNOG" id="COG3906">
    <property type="taxonomic scope" value="Bacteria"/>
</dbReference>
<dbReference type="HOGENOM" id="CLU_146610_2_1_9"/>
<dbReference type="OMA" id="HSDDYDK"/>
<dbReference type="OrthoDB" id="2086132at2"/>
<dbReference type="Proteomes" id="UP000000427">
    <property type="component" value="Chromosome"/>
</dbReference>
<dbReference type="Proteomes" id="UP000000594">
    <property type="component" value="Chromosome"/>
</dbReference>
<dbReference type="HAMAP" id="MF_01448">
    <property type="entry name" value="UPF0473"/>
    <property type="match status" value="1"/>
</dbReference>
<dbReference type="InterPro" id="IPR009711">
    <property type="entry name" value="UPF0473"/>
</dbReference>
<dbReference type="NCBIfam" id="NF010216">
    <property type="entry name" value="PRK13678.1-3"/>
    <property type="match status" value="1"/>
</dbReference>
<dbReference type="PANTHER" id="PTHR40066">
    <property type="entry name" value="UPF0473 PROTEIN CBO2561/CLC_2432"/>
    <property type="match status" value="1"/>
</dbReference>
<dbReference type="PANTHER" id="PTHR40066:SF1">
    <property type="entry name" value="UPF0473 PROTEIN CBO2561_CLC_2432"/>
    <property type="match status" value="1"/>
</dbReference>
<dbReference type="Pfam" id="PF06949">
    <property type="entry name" value="DUF1292"/>
    <property type="match status" value="1"/>
</dbReference>
<organism>
    <name type="scientific">Bacillus anthracis</name>
    <dbReference type="NCBI Taxonomy" id="1392"/>
    <lineage>
        <taxon>Bacteria</taxon>
        <taxon>Bacillati</taxon>
        <taxon>Bacillota</taxon>
        <taxon>Bacilli</taxon>
        <taxon>Bacillales</taxon>
        <taxon>Bacillaceae</taxon>
        <taxon>Bacillus</taxon>
        <taxon>Bacillus cereus group</taxon>
    </lineage>
</organism>
<proteinExistence type="inferred from homology"/>
<protein>
    <recommendedName>
        <fullName evidence="1">UPF0473 protein BA_4613/GBAA_4613/BAS4281</fullName>
    </recommendedName>
</protein>
<sequence>MEENQITIVDEKGNEHLCEIIFTFDAEKFGKKSYVVFSPIGEVDEDGDQIYDAMAYEQNEEEGGTLLPIESEEEWEMVQEMFNTLADEQEAE</sequence>
<keyword id="KW-1185">Reference proteome</keyword>